<name>PANB_PSE14</name>
<organism>
    <name type="scientific">Pseudomonas savastanoi pv. phaseolicola (strain 1448A / Race 6)</name>
    <name type="common">Pseudomonas syringae pv. phaseolicola (strain 1448A / Race 6)</name>
    <dbReference type="NCBI Taxonomy" id="264730"/>
    <lineage>
        <taxon>Bacteria</taxon>
        <taxon>Pseudomonadati</taxon>
        <taxon>Pseudomonadota</taxon>
        <taxon>Gammaproteobacteria</taxon>
        <taxon>Pseudomonadales</taxon>
        <taxon>Pseudomonadaceae</taxon>
        <taxon>Pseudomonas</taxon>
    </lineage>
</organism>
<protein>
    <recommendedName>
        <fullName evidence="1">3-methyl-2-oxobutanoate hydroxymethyltransferase</fullName>
        <ecNumber evidence="1">2.1.2.11</ecNumber>
    </recommendedName>
    <alternativeName>
        <fullName evidence="1">Ketopantoate hydroxymethyltransferase</fullName>
        <shortName evidence="1">KPHMT</shortName>
    </alternativeName>
</protein>
<reference key="1">
    <citation type="journal article" date="2005" name="J. Bacteriol.">
        <title>Whole-genome sequence analysis of Pseudomonas syringae pv. phaseolicola 1448A reveals divergence among pathovars in genes involved in virulence and transposition.</title>
        <authorList>
            <person name="Joardar V."/>
            <person name="Lindeberg M."/>
            <person name="Jackson R.W."/>
            <person name="Selengut J."/>
            <person name="Dodson R."/>
            <person name="Brinkac L.M."/>
            <person name="Daugherty S.C."/>
            <person name="DeBoy R.T."/>
            <person name="Durkin A.S."/>
            <person name="Gwinn Giglio M."/>
            <person name="Madupu R."/>
            <person name="Nelson W.C."/>
            <person name="Rosovitz M.J."/>
            <person name="Sullivan S.A."/>
            <person name="Crabtree J."/>
            <person name="Creasy T."/>
            <person name="Davidsen T.M."/>
            <person name="Haft D.H."/>
            <person name="Zafar N."/>
            <person name="Zhou L."/>
            <person name="Halpin R."/>
            <person name="Holley T."/>
            <person name="Khouri H.M."/>
            <person name="Feldblyum T.V."/>
            <person name="White O."/>
            <person name="Fraser C.M."/>
            <person name="Chatterjee A.K."/>
            <person name="Cartinhour S."/>
            <person name="Schneider D."/>
            <person name="Mansfield J.W."/>
            <person name="Collmer A."/>
            <person name="Buell R."/>
        </authorList>
    </citation>
    <scope>NUCLEOTIDE SEQUENCE [LARGE SCALE GENOMIC DNA]</scope>
    <source>
        <strain>1448A / Race 6</strain>
    </source>
</reference>
<dbReference type="EC" id="2.1.2.11" evidence="1"/>
<dbReference type="EMBL" id="CP000058">
    <property type="protein sequence ID" value="AAZ35951.1"/>
    <property type="molecule type" value="Genomic_DNA"/>
</dbReference>
<dbReference type="RefSeq" id="WP_004658626.1">
    <property type="nucleotide sequence ID" value="NC_005773.3"/>
</dbReference>
<dbReference type="SMR" id="Q48N86"/>
<dbReference type="KEGG" id="psp:PSPPH_0854"/>
<dbReference type="eggNOG" id="COG0413">
    <property type="taxonomic scope" value="Bacteria"/>
</dbReference>
<dbReference type="HOGENOM" id="CLU_036645_1_0_6"/>
<dbReference type="UniPathway" id="UPA00028">
    <property type="reaction ID" value="UER00003"/>
</dbReference>
<dbReference type="Proteomes" id="UP000000551">
    <property type="component" value="Chromosome"/>
</dbReference>
<dbReference type="GO" id="GO:0005737">
    <property type="term" value="C:cytoplasm"/>
    <property type="evidence" value="ECO:0007669"/>
    <property type="project" value="UniProtKB-SubCell"/>
</dbReference>
<dbReference type="GO" id="GO:0003864">
    <property type="term" value="F:3-methyl-2-oxobutanoate hydroxymethyltransferase activity"/>
    <property type="evidence" value="ECO:0007669"/>
    <property type="project" value="UniProtKB-UniRule"/>
</dbReference>
<dbReference type="GO" id="GO:0000287">
    <property type="term" value="F:magnesium ion binding"/>
    <property type="evidence" value="ECO:0007669"/>
    <property type="project" value="TreeGrafter"/>
</dbReference>
<dbReference type="GO" id="GO:0015940">
    <property type="term" value="P:pantothenate biosynthetic process"/>
    <property type="evidence" value="ECO:0007669"/>
    <property type="project" value="UniProtKB-UniRule"/>
</dbReference>
<dbReference type="CDD" id="cd06557">
    <property type="entry name" value="KPHMT-like"/>
    <property type="match status" value="1"/>
</dbReference>
<dbReference type="FunFam" id="3.20.20.60:FF:000003">
    <property type="entry name" value="3-methyl-2-oxobutanoate hydroxymethyltransferase"/>
    <property type="match status" value="1"/>
</dbReference>
<dbReference type="Gene3D" id="3.20.20.60">
    <property type="entry name" value="Phosphoenolpyruvate-binding domains"/>
    <property type="match status" value="1"/>
</dbReference>
<dbReference type="HAMAP" id="MF_00156">
    <property type="entry name" value="PanB"/>
    <property type="match status" value="1"/>
</dbReference>
<dbReference type="InterPro" id="IPR003700">
    <property type="entry name" value="Pantoate_hydroxy_MeTrfase"/>
</dbReference>
<dbReference type="InterPro" id="IPR015813">
    <property type="entry name" value="Pyrv/PenolPyrv_kinase-like_dom"/>
</dbReference>
<dbReference type="InterPro" id="IPR040442">
    <property type="entry name" value="Pyrv_kinase-like_dom_sf"/>
</dbReference>
<dbReference type="NCBIfam" id="TIGR00222">
    <property type="entry name" value="panB"/>
    <property type="match status" value="1"/>
</dbReference>
<dbReference type="NCBIfam" id="NF001452">
    <property type="entry name" value="PRK00311.1"/>
    <property type="match status" value="1"/>
</dbReference>
<dbReference type="PANTHER" id="PTHR20881">
    <property type="entry name" value="3-METHYL-2-OXOBUTANOATE HYDROXYMETHYLTRANSFERASE"/>
    <property type="match status" value="1"/>
</dbReference>
<dbReference type="PANTHER" id="PTHR20881:SF0">
    <property type="entry name" value="3-METHYL-2-OXOBUTANOATE HYDROXYMETHYLTRANSFERASE"/>
    <property type="match status" value="1"/>
</dbReference>
<dbReference type="Pfam" id="PF02548">
    <property type="entry name" value="Pantoate_transf"/>
    <property type="match status" value="1"/>
</dbReference>
<dbReference type="PIRSF" id="PIRSF000388">
    <property type="entry name" value="Pantoate_hydroxy_MeTrfase"/>
    <property type="match status" value="1"/>
</dbReference>
<dbReference type="SUPFAM" id="SSF51621">
    <property type="entry name" value="Phosphoenolpyruvate/pyruvate domain"/>
    <property type="match status" value="1"/>
</dbReference>
<proteinExistence type="inferred from homology"/>
<comment type="function">
    <text evidence="1">Catalyzes the reversible reaction in which hydroxymethyl group from 5,10-methylenetetrahydrofolate is transferred onto alpha-ketoisovalerate to form ketopantoate.</text>
</comment>
<comment type="catalytic activity">
    <reaction evidence="1">
        <text>3-methyl-2-oxobutanoate + (6R)-5,10-methylene-5,6,7,8-tetrahydrofolate + H2O = 2-dehydropantoate + (6S)-5,6,7,8-tetrahydrofolate</text>
        <dbReference type="Rhea" id="RHEA:11824"/>
        <dbReference type="ChEBI" id="CHEBI:11561"/>
        <dbReference type="ChEBI" id="CHEBI:11851"/>
        <dbReference type="ChEBI" id="CHEBI:15377"/>
        <dbReference type="ChEBI" id="CHEBI:15636"/>
        <dbReference type="ChEBI" id="CHEBI:57453"/>
        <dbReference type="EC" id="2.1.2.11"/>
    </reaction>
</comment>
<comment type="cofactor">
    <cofactor evidence="1">
        <name>Mg(2+)</name>
        <dbReference type="ChEBI" id="CHEBI:18420"/>
    </cofactor>
    <text evidence="1">Binds 1 Mg(2+) ion per subunit.</text>
</comment>
<comment type="pathway">
    <text evidence="1">Cofactor biosynthesis; (R)-pantothenate biosynthesis; (R)-pantoate from 3-methyl-2-oxobutanoate: step 1/2.</text>
</comment>
<comment type="subunit">
    <text evidence="1">Homodecamer; pentamer of dimers.</text>
</comment>
<comment type="subcellular location">
    <subcellularLocation>
        <location evidence="1">Cytoplasm</location>
    </subcellularLocation>
</comment>
<comment type="similarity">
    <text evidence="1">Belongs to the PanB family.</text>
</comment>
<accession>Q48N86</accession>
<gene>
    <name evidence="1" type="primary">panB</name>
    <name type="ordered locus">PSPPH_0854</name>
</gene>
<feature type="chain" id="PRO_0000297341" description="3-methyl-2-oxobutanoate hydroxymethyltransferase">
    <location>
        <begin position="1"/>
        <end position="266"/>
    </location>
</feature>
<feature type="active site" description="Proton acceptor" evidence="1">
    <location>
        <position position="181"/>
    </location>
</feature>
<feature type="binding site" evidence="1">
    <location>
        <begin position="45"/>
        <end position="46"/>
    </location>
    <ligand>
        <name>3-methyl-2-oxobutanoate</name>
        <dbReference type="ChEBI" id="CHEBI:11851"/>
    </ligand>
</feature>
<feature type="binding site" evidence="1">
    <location>
        <position position="45"/>
    </location>
    <ligand>
        <name>Mg(2+)</name>
        <dbReference type="ChEBI" id="CHEBI:18420"/>
    </ligand>
</feature>
<feature type="binding site" evidence="1">
    <location>
        <position position="84"/>
    </location>
    <ligand>
        <name>3-methyl-2-oxobutanoate</name>
        <dbReference type="ChEBI" id="CHEBI:11851"/>
    </ligand>
</feature>
<feature type="binding site" evidence="1">
    <location>
        <position position="84"/>
    </location>
    <ligand>
        <name>Mg(2+)</name>
        <dbReference type="ChEBI" id="CHEBI:18420"/>
    </ligand>
</feature>
<feature type="binding site" evidence="1">
    <location>
        <position position="112"/>
    </location>
    <ligand>
        <name>3-methyl-2-oxobutanoate</name>
        <dbReference type="ChEBI" id="CHEBI:11851"/>
    </ligand>
</feature>
<feature type="binding site" evidence="1">
    <location>
        <position position="114"/>
    </location>
    <ligand>
        <name>Mg(2+)</name>
        <dbReference type="ChEBI" id="CHEBI:18420"/>
    </ligand>
</feature>
<sequence>MPNITVTSLLAMKQKGEKITMLTCYDATFAHTASQAGVEVLLIGDSLGMVLQGHDSTLPVTTAETAYHVACVKRGNQGAMILADLPFMANATLEQTFINSATLMQAGAHMIKVEGAAWLGESIRLLAERGIPVCAHMGLTPQAVNVLGGYKVQGRLEAQARQMRADAIALEQAGAAMILLECVPSELAEEITQAVKIPVIGIGAGSATDGQVLVLHDMLGLSISGRVPKFVKNFMTGQPDIQSAIRAYVAAVKDVSFPATEHGFSA</sequence>
<keyword id="KW-0963">Cytoplasm</keyword>
<keyword id="KW-0460">Magnesium</keyword>
<keyword id="KW-0479">Metal-binding</keyword>
<keyword id="KW-0566">Pantothenate biosynthesis</keyword>
<keyword id="KW-0808">Transferase</keyword>
<evidence type="ECO:0000255" key="1">
    <source>
        <dbReference type="HAMAP-Rule" id="MF_00156"/>
    </source>
</evidence>